<accession>Q96Y44</accession>
<feature type="chain" id="PRO_0000057641" description="UPF0282 protein STK_23220">
    <location>
        <begin position="1"/>
        <end position="308"/>
    </location>
</feature>
<gene>
    <name type="ordered locus">STK_23220</name>
</gene>
<proteinExistence type="inferred from homology"/>
<keyword id="KW-1185">Reference proteome</keyword>
<evidence type="ECO:0000255" key="1">
    <source>
        <dbReference type="HAMAP-Rule" id="MF_01406"/>
    </source>
</evidence>
<organism>
    <name type="scientific">Sulfurisphaera tokodaii (strain DSM 16993 / JCM 10545 / NBRC 100140 / 7)</name>
    <name type="common">Sulfolobus tokodaii</name>
    <dbReference type="NCBI Taxonomy" id="273063"/>
    <lineage>
        <taxon>Archaea</taxon>
        <taxon>Thermoproteota</taxon>
        <taxon>Thermoprotei</taxon>
        <taxon>Sulfolobales</taxon>
        <taxon>Sulfolobaceae</taxon>
        <taxon>Sulfurisphaera</taxon>
    </lineage>
</organism>
<comment type="similarity">
    <text evidence="1">Belongs to the UPF0282 family.</text>
</comment>
<reference key="1">
    <citation type="journal article" date="2001" name="DNA Res.">
        <title>Complete genome sequence of an aerobic thermoacidophilic Crenarchaeon, Sulfolobus tokodaii strain7.</title>
        <authorList>
            <person name="Kawarabayasi Y."/>
            <person name="Hino Y."/>
            <person name="Horikawa H."/>
            <person name="Jin-no K."/>
            <person name="Takahashi M."/>
            <person name="Sekine M."/>
            <person name="Baba S."/>
            <person name="Ankai A."/>
            <person name="Kosugi H."/>
            <person name="Hosoyama A."/>
            <person name="Fukui S."/>
            <person name="Nagai Y."/>
            <person name="Nishijima K."/>
            <person name="Otsuka R."/>
            <person name="Nakazawa H."/>
            <person name="Takamiya M."/>
            <person name="Kato Y."/>
            <person name="Yoshizawa T."/>
            <person name="Tanaka T."/>
            <person name="Kudoh Y."/>
            <person name="Yamazaki J."/>
            <person name="Kushida N."/>
            <person name="Oguchi A."/>
            <person name="Aoki K."/>
            <person name="Masuda S."/>
            <person name="Yanagii M."/>
            <person name="Nishimura M."/>
            <person name="Yamagishi A."/>
            <person name="Oshima T."/>
            <person name="Kikuchi H."/>
        </authorList>
    </citation>
    <scope>NUCLEOTIDE SEQUENCE [LARGE SCALE GENOMIC DNA]</scope>
    <source>
        <strain>DSM 16993 / JCM 10545 / NBRC 100140 / 7</strain>
    </source>
</reference>
<protein>
    <recommendedName>
        <fullName evidence="1">UPF0282 protein STK_23220</fullName>
    </recommendedName>
</protein>
<dbReference type="EMBL" id="BA000023">
    <property type="protein sequence ID" value="BAB67433.1"/>
    <property type="molecule type" value="Genomic_DNA"/>
</dbReference>
<dbReference type="RefSeq" id="WP_010980408.1">
    <property type="nucleotide sequence ID" value="NC_003106.2"/>
</dbReference>
<dbReference type="STRING" id="273063.STK_23220"/>
<dbReference type="GeneID" id="1460406"/>
<dbReference type="KEGG" id="sto:STK_23220"/>
<dbReference type="PATRIC" id="fig|273063.9.peg.2627"/>
<dbReference type="eggNOG" id="arCOG00969">
    <property type="taxonomic scope" value="Archaea"/>
</dbReference>
<dbReference type="OrthoDB" id="21331at2157"/>
<dbReference type="Proteomes" id="UP000001015">
    <property type="component" value="Chromosome"/>
</dbReference>
<dbReference type="Gene3D" id="3.60.15.10">
    <property type="entry name" value="Ribonuclease Z/Hydroxyacylglutathione hydrolase-like"/>
    <property type="match status" value="1"/>
</dbReference>
<dbReference type="HAMAP" id="MF_01406">
    <property type="entry name" value="UPF0282"/>
    <property type="match status" value="1"/>
</dbReference>
<dbReference type="InterPro" id="IPR001279">
    <property type="entry name" value="Metallo-B-lactamas"/>
</dbReference>
<dbReference type="InterPro" id="IPR036866">
    <property type="entry name" value="RibonucZ/Hydroxyglut_hydro"/>
</dbReference>
<dbReference type="InterPro" id="IPR050114">
    <property type="entry name" value="UPF0173_UPF0282_UlaG_hydrolase"/>
</dbReference>
<dbReference type="InterPro" id="IPR014426">
    <property type="entry name" value="UPF0282_hydrls"/>
</dbReference>
<dbReference type="NCBIfam" id="NF003287">
    <property type="entry name" value="PRK04286.1-1"/>
    <property type="match status" value="1"/>
</dbReference>
<dbReference type="PANTHER" id="PTHR43546">
    <property type="entry name" value="UPF0173 METAL-DEPENDENT HYDROLASE MJ1163-RELATED"/>
    <property type="match status" value="1"/>
</dbReference>
<dbReference type="PANTHER" id="PTHR43546:SF4">
    <property type="entry name" value="UPF0282 PROTEIN MJ1629"/>
    <property type="match status" value="1"/>
</dbReference>
<dbReference type="Pfam" id="PF00753">
    <property type="entry name" value="Lactamase_B"/>
    <property type="match status" value="1"/>
</dbReference>
<dbReference type="PIRSF" id="PIRSF004944">
    <property type="entry name" value="UCP004944_hydrls"/>
    <property type="match status" value="1"/>
</dbReference>
<dbReference type="SUPFAM" id="SSF56281">
    <property type="entry name" value="Metallo-hydrolase/oxidoreductase"/>
    <property type="match status" value="1"/>
</dbReference>
<name>Y2322_SULTO</name>
<sequence>MKVTPLAFESLGVRSQATLVETKDVRILIDPAVSLAPRRYGLPPHQLEVDKLTELAKKIYEISKDVDIIVITHYHYDHHDPGYVIPIEIYSNKMVFIKDPTNNINNSQKYRRAPKFLRALKDIPNKIEVADGKEFIFGSTKLIFSKAVPHGADERLGYVIQLGINDKDGTVLFTSDIEGAPKEQHLDFTKKISPNFIIIDGPLSYLLGRALSEEDLDKSIKNMESIVKNGLQYAIIDHHVLRDLNHENVLKPVKEVAKDFGVKVISAAEYLGVEPNLLEAHRRELFKKENKPARIPRGLAKLLHAGDN</sequence>